<accession>B8ZLY9</accession>
<evidence type="ECO:0000255" key="1">
    <source>
        <dbReference type="HAMAP-Rule" id="MF_00332"/>
    </source>
</evidence>
<evidence type="ECO:0000256" key="2">
    <source>
        <dbReference type="SAM" id="MobiDB-lite"/>
    </source>
</evidence>
<keyword id="KW-0067">ATP-binding</keyword>
<keyword id="KW-0143">Chaperone</keyword>
<keyword id="KW-0547">Nucleotide-binding</keyword>
<keyword id="KW-0597">Phosphoprotein</keyword>
<keyword id="KW-0346">Stress response</keyword>
<reference key="1">
    <citation type="journal article" date="2009" name="J. Bacteriol.">
        <title>Role of conjugative elements in the evolution of the multidrug-resistant pandemic clone Streptococcus pneumoniae Spain23F ST81.</title>
        <authorList>
            <person name="Croucher N.J."/>
            <person name="Walker D."/>
            <person name="Romero P."/>
            <person name="Lennard N."/>
            <person name="Paterson G.K."/>
            <person name="Bason N.C."/>
            <person name="Mitchell A.M."/>
            <person name="Quail M.A."/>
            <person name="Andrew P.W."/>
            <person name="Parkhill J."/>
            <person name="Bentley S.D."/>
            <person name="Mitchell T.J."/>
        </authorList>
    </citation>
    <scope>NUCLEOTIDE SEQUENCE [LARGE SCALE GENOMIC DNA]</scope>
    <source>
        <strain>ATCC 700669 / Spain 23F-1</strain>
    </source>
</reference>
<organism>
    <name type="scientific">Streptococcus pneumoniae (strain ATCC 700669 / Spain 23F-1)</name>
    <dbReference type="NCBI Taxonomy" id="561276"/>
    <lineage>
        <taxon>Bacteria</taxon>
        <taxon>Bacillati</taxon>
        <taxon>Bacillota</taxon>
        <taxon>Bacilli</taxon>
        <taxon>Lactobacillales</taxon>
        <taxon>Streptococcaceae</taxon>
        <taxon>Streptococcus</taxon>
    </lineage>
</organism>
<comment type="function">
    <text evidence="1">Acts as a chaperone.</text>
</comment>
<comment type="induction">
    <text evidence="1">By stress conditions e.g. heat shock.</text>
</comment>
<comment type="similarity">
    <text evidence="1">Belongs to the heat shock protein 70 family.</text>
</comment>
<dbReference type="EMBL" id="FM211187">
    <property type="protein sequence ID" value="CAR68313.1"/>
    <property type="molecule type" value="Genomic_DNA"/>
</dbReference>
<dbReference type="RefSeq" id="WP_000034665.1">
    <property type="nucleotide sequence ID" value="NC_011900.1"/>
</dbReference>
<dbReference type="SMR" id="B8ZLY9"/>
<dbReference type="KEGG" id="sne:SPN23F04680"/>
<dbReference type="HOGENOM" id="CLU_005965_2_4_9"/>
<dbReference type="GO" id="GO:0005524">
    <property type="term" value="F:ATP binding"/>
    <property type="evidence" value="ECO:0007669"/>
    <property type="project" value="UniProtKB-UniRule"/>
</dbReference>
<dbReference type="GO" id="GO:0140662">
    <property type="term" value="F:ATP-dependent protein folding chaperone"/>
    <property type="evidence" value="ECO:0007669"/>
    <property type="project" value="InterPro"/>
</dbReference>
<dbReference type="GO" id="GO:0051082">
    <property type="term" value="F:unfolded protein binding"/>
    <property type="evidence" value="ECO:0007669"/>
    <property type="project" value="InterPro"/>
</dbReference>
<dbReference type="CDD" id="cd10234">
    <property type="entry name" value="ASKHA_NBD_HSP70_DnaK-like"/>
    <property type="match status" value="1"/>
</dbReference>
<dbReference type="FunFam" id="2.60.34.10:FF:000014">
    <property type="entry name" value="Chaperone protein DnaK HSP70"/>
    <property type="match status" value="1"/>
</dbReference>
<dbReference type="FunFam" id="1.20.1270.10:FF:000004">
    <property type="entry name" value="Molecular chaperone DnaK"/>
    <property type="match status" value="1"/>
</dbReference>
<dbReference type="FunFam" id="3.30.420.40:FF:000071">
    <property type="entry name" value="Molecular chaperone DnaK"/>
    <property type="match status" value="1"/>
</dbReference>
<dbReference type="FunFam" id="3.90.640.10:FF:000003">
    <property type="entry name" value="Molecular chaperone DnaK"/>
    <property type="match status" value="1"/>
</dbReference>
<dbReference type="Gene3D" id="1.20.1270.10">
    <property type="match status" value="1"/>
</dbReference>
<dbReference type="Gene3D" id="3.30.420.40">
    <property type="match status" value="2"/>
</dbReference>
<dbReference type="Gene3D" id="3.90.640.10">
    <property type="entry name" value="Actin, Chain A, domain 4"/>
    <property type="match status" value="1"/>
</dbReference>
<dbReference type="Gene3D" id="2.60.34.10">
    <property type="entry name" value="Substrate Binding Domain Of DNAk, Chain A, domain 1"/>
    <property type="match status" value="1"/>
</dbReference>
<dbReference type="HAMAP" id="MF_00332">
    <property type="entry name" value="DnaK"/>
    <property type="match status" value="1"/>
</dbReference>
<dbReference type="InterPro" id="IPR043129">
    <property type="entry name" value="ATPase_NBD"/>
</dbReference>
<dbReference type="InterPro" id="IPR012725">
    <property type="entry name" value="Chaperone_DnaK"/>
</dbReference>
<dbReference type="InterPro" id="IPR018181">
    <property type="entry name" value="Heat_shock_70_CS"/>
</dbReference>
<dbReference type="InterPro" id="IPR029048">
    <property type="entry name" value="HSP70_C_sf"/>
</dbReference>
<dbReference type="InterPro" id="IPR029047">
    <property type="entry name" value="HSP70_peptide-bd_sf"/>
</dbReference>
<dbReference type="InterPro" id="IPR013126">
    <property type="entry name" value="Hsp_70_fam"/>
</dbReference>
<dbReference type="NCBIfam" id="NF001413">
    <property type="entry name" value="PRK00290.1"/>
    <property type="match status" value="1"/>
</dbReference>
<dbReference type="NCBIfam" id="TIGR02350">
    <property type="entry name" value="prok_dnaK"/>
    <property type="match status" value="1"/>
</dbReference>
<dbReference type="PANTHER" id="PTHR19375">
    <property type="entry name" value="HEAT SHOCK PROTEIN 70KDA"/>
    <property type="match status" value="1"/>
</dbReference>
<dbReference type="Pfam" id="PF00012">
    <property type="entry name" value="HSP70"/>
    <property type="match status" value="1"/>
</dbReference>
<dbReference type="PRINTS" id="PR00301">
    <property type="entry name" value="HEATSHOCK70"/>
</dbReference>
<dbReference type="SUPFAM" id="SSF53067">
    <property type="entry name" value="Actin-like ATPase domain"/>
    <property type="match status" value="2"/>
</dbReference>
<dbReference type="SUPFAM" id="SSF100934">
    <property type="entry name" value="Heat shock protein 70kD (HSP70), C-terminal subdomain"/>
    <property type="match status" value="1"/>
</dbReference>
<dbReference type="SUPFAM" id="SSF100920">
    <property type="entry name" value="Heat shock protein 70kD (HSP70), peptide-binding domain"/>
    <property type="match status" value="1"/>
</dbReference>
<dbReference type="PROSITE" id="PS00297">
    <property type="entry name" value="HSP70_1"/>
    <property type="match status" value="1"/>
</dbReference>
<dbReference type="PROSITE" id="PS00329">
    <property type="entry name" value="HSP70_2"/>
    <property type="match status" value="1"/>
</dbReference>
<dbReference type="PROSITE" id="PS01036">
    <property type="entry name" value="HSP70_3"/>
    <property type="match status" value="1"/>
</dbReference>
<gene>
    <name evidence="1" type="primary">dnaK</name>
    <name type="ordered locus">SPN23F04680</name>
</gene>
<feature type="chain" id="PRO_1000133163" description="Chaperone protein DnaK">
    <location>
        <begin position="1"/>
        <end position="607"/>
    </location>
</feature>
<feature type="region of interest" description="Disordered" evidence="2">
    <location>
        <begin position="581"/>
        <end position="607"/>
    </location>
</feature>
<feature type="compositionally biased region" description="Low complexity" evidence="2">
    <location>
        <begin position="581"/>
        <end position="591"/>
    </location>
</feature>
<feature type="compositionally biased region" description="Acidic residues" evidence="2">
    <location>
        <begin position="598"/>
        <end position="607"/>
    </location>
</feature>
<feature type="modified residue" description="Phosphothreonine; by autocatalysis" evidence="1">
    <location>
        <position position="173"/>
    </location>
</feature>
<proteinExistence type="inferred from homology"/>
<name>DNAK_STRPJ</name>
<sequence length="607" mass="64842">MSKIIGIDLGTTNSAVAVLEGTESKIIANPEGNRTTPSVVSFKNGEIIVGDAAKRQAVTNPDTVISIKSKMGTSEKVSANGKEYTPQEISAMILQYLKGYAEDYLGEKVTKAVITVPAYFNDAQRQATKDAGKIAGLEVERIVNEPTAAALAYGLDKTDKEEKILVFDLGGGTFDVSILELGDGVFDVLSTAGDNKLGGDDFDQKIIDHLVAEFKKENGIDLSTDKMAMQRLKDAAEKAKKDLSGVTSTQISLPFITAGEAGPLHLEMTLTRAKFDDLTRDLVERTKVPVRQALSDAGLSLSEIDEVILVGGSTRIPAVVEAVKAETGKEPNKSVNPDEVVAMGAAIQGGVITGDVKDVVLLDVTPLSLGIETMGGVFTKLIDRNTTIPTSKSQVFSTAADNQPAVDIHVLQGERPMAADNKTLGRFQLTDIPAAPRGIPQIEVTFDIDKNGIVSVKAKDLGTQKEQTIVIQSNSGLTDEEIDRMMKDAEANAEADKKRKEEVDLRNEVDQAIFATEKTIKETEGKGFDAERDAAQAALDDLKKAQEDNNLDDMKTKLEALNEKAQGLAVKLYEQAAAAQQAQEGAEGAQATGNAGDDVVDGEFTEK</sequence>
<protein>
    <recommendedName>
        <fullName evidence="1">Chaperone protein DnaK</fullName>
    </recommendedName>
    <alternativeName>
        <fullName evidence="1">HSP70</fullName>
    </alternativeName>
    <alternativeName>
        <fullName evidence="1">Heat shock 70 kDa protein</fullName>
    </alternativeName>
    <alternativeName>
        <fullName evidence="1">Heat shock protein 70</fullName>
    </alternativeName>
</protein>